<sequence length="35" mass="3629">VNYGNGVSCSKTKCSVNWGIITHQAFRVTSGVASG</sequence>
<protein>
    <recommendedName>
        <fullName evidence="3">Bacteriocin SRCAM 1580</fullName>
    </recommendedName>
</protein>
<name>BCN80_NIACI</name>
<proteinExistence type="evidence at protein level"/>
<accession>P86394</accession>
<evidence type="ECO:0000255" key="1"/>
<evidence type="ECO:0000269" key="2">
    <source>
    </source>
</evidence>
<evidence type="ECO:0000303" key="3">
    <source>
    </source>
</evidence>
<evidence type="ECO:0000305" key="4"/>
<dbReference type="GO" id="GO:0005576">
    <property type="term" value="C:extracellular region"/>
    <property type="evidence" value="ECO:0007669"/>
    <property type="project" value="UniProtKB-SubCell"/>
</dbReference>
<dbReference type="GO" id="GO:0042742">
    <property type="term" value="P:defense response to bacterium"/>
    <property type="evidence" value="ECO:0007669"/>
    <property type="project" value="UniProtKB-KW"/>
</dbReference>
<dbReference type="GO" id="GO:0031640">
    <property type="term" value="P:killing of cells of another organism"/>
    <property type="evidence" value="ECO:0007669"/>
    <property type="project" value="UniProtKB-KW"/>
</dbReference>
<dbReference type="Gene3D" id="1.20.5.130">
    <property type="match status" value="1"/>
</dbReference>
<dbReference type="InterPro" id="IPR002633">
    <property type="entry name" value="Bacteriocin_IIa"/>
</dbReference>
<dbReference type="InterPro" id="IPR023384">
    <property type="entry name" value="Bacteriocin_IIa_CS"/>
</dbReference>
<dbReference type="InterPro" id="IPR023388">
    <property type="entry name" value="Bacteriocin_IIa_dom_sf"/>
</dbReference>
<dbReference type="Pfam" id="PF01721">
    <property type="entry name" value="Bacteriocin_II"/>
    <property type="match status" value="1"/>
</dbReference>
<dbReference type="PROSITE" id="PS60030">
    <property type="entry name" value="BACTERIOCIN_IIA"/>
    <property type="match status" value="1"/>
</dbReference>
<comment type="function">
    <text evidence="2">Bacteriocin with antibacterial activity against C.jejuni.</text>
</comment>
<comment type="biophysicochemical properties">
    <phDependence>
        <text evidence="2">Stable from pH 3.0-9.0, inactivated at pH 10.0.</text>
    </phDependence>
    <temperatureDependence>
        <text evidence="2">Thermostable, activity is retained after incubation at 100 degrees Celsius for 15 minutes.</text>
    </temperatureDependence>
</comment>
<comment type="subcellular location">
    <subcellularLocation>
        <location evidence="2">Secreted</location>
    </subcellularLocation>
</comment>
<comment type="mass spectrometry" mass="3486.0" method="MALDI" evidence="2"/>
<comment type="miscellaneous">
    <text evidence="2">Antimicrobial activity is lost upon treatment with beta-chymotrypsin, proteinase K and papain, but not when treated with lysozyme or lipase.</text>
</comment>
<comment type="similarity">
    <text evidence="1">Belongs to the bacteriocin class IIA/YGNGV family.</text>
</comment>
<reference evidence="4" key="1">
    <citation type="journal article" date="2005" name="J. Food Prot.">
        <title>Isolation of Bacillus circulans and Paenibacillus polymyxa strains inhibitory to Campylobacter jejuni and characterization of associated bacteriocins.</title>
        <authorList>
            <person name="Svetoch E.A."/>
            <person name="Stern N.J."/>
            <person name="Eruslanov B.V."/>
            <person name="Kovalev Y.N."/>
            <person name="Volodina L.I."/>
            <person name="Perelygin V.V."/>
            <person name="Mitsevich E.V."/>
            <person name="Mitsevich I.P."/>
            <person name="Pokhilenko V.D."/>
            <person name="Borzenkov V.N."/>
            <person name="Levchuk V.P."/>
            <person name="Svetoch O.E."/>
            <person name="Kudriavtseva T.Y."/>
        </authorList>
    </citation>
    <scope>PROTEIN SEQUENCE</scope>
    <scope>FUNCTION</scope>
    <scope>BIOPHYSICOCHEMICAL PROPERTIES</scope>
    <scope>SUBCELLULAR LOCATION</scope>
    <scope>MASS SPECTROMETRY</scope>
    <source>
        <strain evidence="2">NRRL B-30664</strain>
    </source>
</reference>
<keyword id="KW-0044">Antibiotic</keyword>
<keyword id="KW-0929">Antimicrobial</keyword>
<keyword id="KW-0078">Bacteriocin</keyword>
<keyword id="KW-0903">Direct protein sequencing</keyword>
<keyword id="KW-0964">Secreted</keyword>
<organism>
    <name type="scientific">Niallia circulans</name>
    <name type="common">Bacillus circulans</name>
    <dbReference type="NCBI Taxonomy" id="1397"/>
    <lineage>
        <taxon>Bacteria</taxon>
        <taxon>Bacillati</taxon>
        <taxon>Bacillota</taxon>
        <taxon>Bacilli</taxon>
        <taxon>Bacillales</taxon>
        <taxon>Bacillaceae</taxon>
        <taxon>Niallia</taxon>
    </lineage>
</organism>
<feature type="chain" id="PRO_0000390700" description="Bacteriocin SRCAM 1580">
    <location>
        <begin position="1"/>
        <end position="35"/>
    </location>
</feature>